<proteinExistence type="inferred from homology"/>
<evidence type="ECO:0000250" key="1"/>
<evidence type="ECO:0000255" key="2">
    <source>
        <dbReference type="HAMAP-Rule" id="MF_00103"/>
    </source>
</evidence>
<feature type="initiator methionine" description="Removed" evidence="1">
    <location>
        <position position="1"/>
    </location>
</feature>
<feature type="chain" id="PRO_1000094062" description="Formamidopyrimidine-DNA glycosylase">
    <location>
        <begin position="2"/>
        <end position="286"/>
    </location>
</feature>
<feature type="zinc finger region" description="FPG-type" evidence="2">
    <location>
        <begin position="252"/>
        <end position="286"/>
    </location>
</feature>
<feature type="active site" description="Schiff-base intermediate with DNA" evidence="2">
    <location>
        <position position="2"/>
    </location>
</feature>
<feature type="active site" description="Proton donor" evidence="2">
    <location>
        <position position="3"/>
    </location>
</feature>
<feature type="active site" description="Proton donor; for beta-elimination activity" evidence="2">
    <location>
        <position position="60"/>
    </location>
</feature>
<feature type="active site" description="Proton donor; for delta-elimination activity" evidence="2">
    <location>
        <position position="276"/>
    </location>
</feature>
<feature type="binding site" evidence="2">
    <location>
        <position position="103"/>
    </location>
    <ligand>
        <name>DNA</name>
        <dbReference type="ChEBI" id="CHEBI:16991"/>
    </ligand>
</feature>
<feature type="binding site" evidence="2">
    <location>
        <position position="122"/>
    </location>
    <ligand>
        <name>DNA</name>
        <dbReference type="ChEBI" id="CHEBI:16991"/>
    </ligand>
</feature>
<feature type="binding site" evidence="2">
    <location>
        <position position="167"/>
    </location>
    <ligand>
        <name>DNA</name>
        <dbReference type="ChEBI" id="CHEBI:16991"/>
    </ligand>
</feature>
<accession>A9BDY5</accession>
<reference key="1">
    <citation type="journal article" date="2007" name="PLoS Genet.">
        <title>Patterns and implications of gene gain and loss in the evolution of Prochlorococcus.</title>
        <authorList>
            <person name="Kettler G.C."/>
            <person name="Martiny A.C."/>
            <person name="Huang K."/>
            <person name="Zucker J."/>
            <person name="Coleman M.L."/>
            <person name="Rodrigue S."/>
            <person name="Chen F."/>
            <person name="Lapidus A."/>
            <person name="Ferriera S."/>
            <person name="Johnson J."/>
            <person name="Steglich C."/>
            <person name="Church G.M."/>
            <person name="Richardson P."/>
            <person name="Chisholm S.W."/>
        </authorList>
    </citation>
    <scope>NUCLEOTIDE SEQUENCE [LARGE SCALE GENOMIC DNA]</scope>
    <source>
        <strain>MIT 9211</strain>
    </source>
</reference>
<sequence>MPELPEVETVRKGLEKRLKNFYIDNVEVLSERSIASNGGSNVFIFNLKDLVFGRWSRRGKYLIASLCKESDLIEEIPSGTLVVHLRMTGYFEWHQNTKAPCTHTRVRFWNKKGSEIRFIDIRNFGQMWWIPPNKLPSEVINGLKNLGPEPFSKDFNPEYLKYCLKGRKRSIKSSLLDQSILAGVGNIYADESLFEAGITPIKASGDLNGCELKKLCKSLTRILKASIGKGGTTFSDFRDLEGLNGTYGGYAWVYRRNQKPCRKCGTLIEKTKVAGRSTHWCPNCQN</sequence>
<protein>
    <recommendedName>
        <fullName evidence="2">Formamidopyrimidine-DNA glycosylase</fullName>
        <shortName evidence="2">Fapy-DNA glycosylase</shortName>
        <ecNumber evidence="2">3.2.2.23</ecNumber>
    </recommendedName>
    <alternativeName>
        <fullName evidence="2">DNA-(apurinic or apyrimidinic site) lyase MutM</fullName>
        <shortName evidence="2">AP lyase MutM</shortName>
        <ecNumber evidence="2">4.2.99.18</ecNumber>
    </alternativeName>
</protein>
<organism>
    <name type="scientific">Prochlorococcus marinus (strain MIT 9211)</name>
    <dbReference type="NCBI Taxonomy" id="93059"/>
    <lineage>
        <taxon>Bacteria</taxon>
        <taxon>Bacillati</taxon>
        <taxon>Cyanobacteriota</taxon>
        <taxon>Cyanophyceae</taxon>
        <taxon>Synechococcales</taxon>
        <taxon>Prochlorococcaceae</taxon>
        <taxon>Prochlorococcus</taxon>
    </lineage>
</organism>
<gene>
    <name evidence="2" type="primary">mutM</name>
    <name evidence="2" type="synonym">fpg</name>
    <name type="ordered locus">P9211_03641</name>
</gene>
<keyword id="KW-0227">DNA damage</keyword>
<keyword id="KW-0234">DNA repair</keyword>
<keyword id="KW-0238">DNA-binding</keyword>
<keyword id="KW-0326">Glycosidase</keyword>
<keyword id="KW-0378">Hydrolase</keyword>
<keyword id="KW-0456">Lyase</keyword>
<keyword id="KW-0479">Metal-binding</keyword>
<keyword id="KW-0511">Multifunctional enzyme</keyword>
<keyword id="KW-1185">Reference proteome</keyword>
<keyword id="KW-0862">Zinc</keyword>
<keyword id="KW-0863">Zinc-finger</keyword>
<comment type="function">
    <text evidence="2">Involved in base excision repair of DNA damaged by oxidation or by mutagenic agents. Acts as a DNA glycosylase that recognizes and removes damaged bases. Has a preference for oxidized purines, such as 7,8-dihydro-8-oxoguanine (8-oxoG). Has AP (apurinic/apyrimidinic) lyase activity and introduces nicks in the DNA strand. Cleaves the DNA backbone by beta-delta elimination to generate a single-strand break at the site of the removed base with both 3'- and 5'-phosphates.</text>
</comment>
<comment type="catalytic activity">
    <reaction evidence="2">
        <text>Hydrolysis of DNA containing ring-opened 7-methylguanine residues, releasing 2,6-diamino-4-hydroxy-5-(N-methyl)formamidopyrimidine.</text>
        <dbReference type="EC" id="3.2.2.23"/>
    </reaction>
</comment>
<comment type="catalytic activity">
    <reaction evidence="2">
        <text>2'-deoxyribonucleotide-(2'-deoxyribose 5'-phosphate)-2'-deoxyribonucleotide-DNA = a 3'-end 2'-deoxyribonucleotide-(2,3-dehydro-2,3-deoxyribose 5'-phosphate)-DNA + a 5'-end 5'-phospho-2'-deoxyribonucleoside-DNA + H(+)</text>
        <dbReference type="Rhea" id="RHEA:66592"/>
        <dbReference type="Rhea" id="RHEA-COMP:13180"/>
        <dbReference type="Rhea" id="RHEA-COMP:16897"/>
        <dbReference type="Rhea" id="RHEA-COMP:17067"/>
        <dbReference type="ChEBI" id="CHEBI:15378"/>
        <dbReference type="ChEBI" id="CHEBI:136412"/>
        <dbReference type="ChEBI" id="CHEBI:157695"/>
        <dbReference type="ChEBI" id="CHEBI:167181"/>
        <dbReference type="EC" id="4.2.99.18"/>
    </reaction>
</comment>
<comment type="cofactor">
    <cofactor evidence="2">
        <name>Zn(2+)</name>
        <dbReference type="ChEBI" id="CHEBI:29105"/>
    </cofactor>
    <text evidence="2">Binds 1 zinc ion per subunit.</text>
</comment>
<comment type="subunit">
    <text evidence="2">Monomer.</text>
</comment>
<comment type="similarity">
    <text evidence="2">Belongs to the FPG family.</text>
</comment>
<name>FPG_PROM4</name>
<dbReference type="EC" id="3.2.2.23" evidence="2"/>
<dbReference type="EC" id="4.2.99.18" evidence="2"/>
<dbReference type="EMBL" id="CP000878">
    <property type="protein sequence ID" value="ABX08295.1"/>
    <property type="molecule type" value="Genomic_DNA"/>
</dbReference>
<dbReference type="RefSeq" id="WP_012194919.1">
    <property type="nucleotide sequence ID" value="NC_009976.1"/>
</dbReference>
<dbReference type="SMR" id="A9BDY5"/>
<dbReference type="STRING" id="93059.P9211_03641"/>
<dbReference type="KEGG" id="pmj:P9211_03641"/>
<dbReference type="eggNOG" id="COG0266">
    <property type="taxonomic scope" value="Bacteria"/>
</dbReference>
<dbReference type="HOGENOM" id="CLU_038423_1_2_3"/>
<dbReference type="OrthoDB" id="9800855at2"/>
<dbReference type="Proteomes" id="UP000000788">
    <property type="component" value="Chromosome"/>
</dbReference>
<dbReference type="GO" id="GO:0034039">
    <property type="term" value="F:8-oxo-7,8-dihydroguanine DNA N-glycosylase activity"/>
    <property type="evidence" value="ECO:0007669"/>
    <property type="project" value="TreeGrafter"/>
</dbReference>
<dbReference type="GO" id="GO:0140078">
    <property type="term" value="F:class I DNA-(apurinic or apyrimidinic site) endonuclease activity"/>
    <property type="evidence" value="ECO:0007669"/>
    <property type="project" value="UniProtKB-EC"/>
</dbReference>
<dbReference type="GO" id="GO:0003684">
    <property type="term" value="F:damaged DNA binding"/>
    <property type="evidence" value="ECO:0007669"/>
    <property type="project" value="InterPro"/>
</dbReference>
<dbReference type="GO" id="GO:0008270">
    <property type="term" value="F:zinc ion binding"/>
    <property type="evidence" value="ECO:0007669"/>
    <property type="project" value="UniProtKB-UniRule"/>
</dbReference>
<dbReference type="GO" id="GO:0006284">
    <property type="term" value="P:base-excision repair"/>
    <property type="evidence" value="ECO:0007669"/>
    <property type="project" value="InterPro"/>
</dbReference>
<dbReference type="CDD" id="cd08966">
    <property type="entry name" value="EcFpg-like_N"/>
    <property type="match status" value="1"/>
</dbReference>
<dbReference type="FunFam" id="1.10.8.50:FF:000003">
    <property type="entry name" value="Formamidopyrimidine-DNA glycosylase"/>
    <property type="match status" value="1"/>
</dbReference>
<dbReference type="Gene3D" id="1.10.8.50">
    <property type="match status" value="1"/>
</dbReference>
<dbReference type="Gene3D" id="3.20.190.10">
    <property type="entry name" value="MutM-like, N-terminal"/>
    <property type="match status" value="1"/>
</dbReference>
<dbReference type="HAMAP" id="MF_00103">
    <property type="entry name" value="Fapy_DNA_glycosyl"/>
    <property type="match status" value="1"/>
</dbReference>
<dbReference type="InterPro" id="IPR015886">
    <property type="entry name" value="DNA_glyclase/AP_lyase_DNA-bd"/>
</dbReference>
<dbReference type="InterPro" id="IPR015887">
    <property type="entry name" value="DNA_glyclase_Znf_dom_DNA_BS"/>
</dbReference>
<dbReference type="InterPro" id="IPR020629">
    <property type="entry name" value="Formamido-pyr_DNA_Glyclase"/>
</dbReference>
<dbReference type="InterPro" id="IPR012319">
    <property type="entry name" value="FPG_cat"/>
</dbReference>
<dbReference type="InterPro" id="IPR035937">
    <property type="entry name" value="MutM-like_N-ter"/>
</dbReference>
<dbReference type="InterPro" id="IPR010979">
    <property type="entry name" value="Ribosomal_uS13-like_H2TH"/>
</dbReference>
<dbReference type="InterPro" id="IPR000214">
    <property type="entry name" value="Znf_DNA_glyclase/AP_lyase"/>
</dbReference>
<dbReference type="InterPro" id="IPR010663">
    <property type="entry name" value="Znf_FPG/IleRS"/>
</dbReference>
<dbReference type="NCBIfam" id="TIGR00577">
    <property type="entry name" value="fpg"/>
    <property type="match status" value="1"/>
</dbReference>
<dbReference type="NCBIfam" id="NF002211">
    <property type="entry name" value="PRK01103.1"/>
    <property type="match status" value="1"/>
</dbReference>
<dbReference type="NCBIfam" id="NF010551">
    <property type="entry name" value="PRK13945.1"/>
    <property type="match status" value="1"/>
</dbReference>
<dbReference type="PANTHER" id="PTHR22993">
    <property type="entry name" value="FORMAMIDOPYRIMIDINE-DNA GLYCOSYLASE"/>
    <property type="match status" value="1"/>
</dbReference>
<dbReference type="PANTHER" id="PTHR22993:SF9">
    <property type="entry name" value="FORMAMIDOPYRIMIDINE-DNA GLYCOSYLASE"/>
    <property type="match status" value="1"/>
</dbReference>
<dbReference type="Pfam" id="PF01149">
    <property type="entry name" value="Fapy_DNA_glyco"/>
    <property type="match status" value="1"/>
</dbReference>
<dbReference type="Pfam" id="PF06831">
    <property type="entry name" value="H2TH"/>
    <property type="match status" value="1"/>
</dbReference>
<dbReference type="Pfam" id="PF06827">
    <property type="entry name" value="zf-FPG_IleRS"/>
    <property type="match status" value="1"/>
</dbReference>
<dbReference type="SMART" id="SM00898">
    <property type="entry name" value="Fapy_DNA_glyco"/>
    <property type="match status" value="1"/>
</dbReference>
<dbReference type="SMART" id="SM01232">
    <property type="entry name" value="H2TH"/>
    <property type="match status" value="1"/>
</dbReference>
<dbReference type="SUPFAM" id="SSF57716">
    <property type="entry name" value="Glucocorticoid receptor-like (DNA-binding domain)"/>
    <property type="match status" value="1"/>
</dbReference>
<dbReference type="SUPFAM" id="SSF81624">
    <property type="entry name" value="N-terminal domain of MutM-like DNA repair proteins"/>
    <property type="match status" value="1"/>
</dbReference>
<dbReference type="SUPFAM" id="SSF46946">
    <property type="entry name" value="S13-like H2TH domain"/>
    <property type="match status" value="1"/>
</dbReference>
<dbReference type="PROSITE" id="PS51068">
    <property type="entry name" value="FPG_CAT"/>
    <property type="match status" value="1"/>
</dbReference>
<dbReference type="PROSITE" id="PS01242">
    <property type="entry name" value="ZF_FPG_1"/>
    <property type="match status" value="1"/>
</dbReference>
<dbReference type="PROSITE" id="PS51066">
    <property type="entry name" value="ZF_FPG_2"/>
    <property type="match status" value="1"/>
</dbReference>